<reference key="1">
    <citation type="journal article" date="1997" name="Curr. Microbiol.">
        <title>Molecular cloning and nucleotide sequence of the porphobilinogen deaminase gene, hemC, from Chlorobium vibrioforme.</title>
        <authorList>
            <person name="Majumdar D."/>
            <person name="Wyche J.H."/>
        </authorList>
    </citation>
    <scope>NUCLEOTIDE SEQUENCE [GENOMIC DNA]</scope>
</reference>
<reference key="2">
    <citation type="submission" date="2008-06" db="EMBL/GenBank/DDBJ databases">
        <title>Complete sequence of Chlorobaculum parvum NCIB 8327.</title>
        <authorList>
            <consortium name="US DOE Joint Genome Institute"/>
            <person name="Lucas S."/>
            <person name="Copeland A."/>
            <person name="Lapidus A."/>
            <person name="Glavina del Rio T."/>
            <person name="Dalin E."/>
            <person name="Tice H."/>
            <person name="Bruce D."/>
            <person name="Goodwin L."/>
            <person name="Pitluck S."/>
            <person name="Schmutz J."/>
            <person name="Larimer F."/>
            <person name="Land M."/>
            <person name="Hauser L."/>
            <person name="Kyrpides N."/>
            <person name="Mikhailova N."/>
            <person name="Zhao F."/>
            <person name="Li T."/>
            <person name="Liu Z."/>
            <person name="Overmann J."/>
            <person name="Bryant D.A."/>
            <person name="Richardson P."/>
        </authorList>
    </citation>
    <scope>NUCLEOTIDE SEQUENCE [LARGE SCALE GENOMIC DNA]</scope>
    <source>
        <strain>DSM 263 / NCIMB 8327</strain>
    </source>
</reference>
<reference key="3">
    <citation type="journal article" date="1991" name="Arch. Microbiol.">
        <title>Structure and expression of the Chlorobium vibrioforme hemA gene.</title>
        <authorList>
            <person name="Majumdar D."/>
            <person name="Avissar Y.J."/>
            <person name="Wyche J.H."/>
            <person name="Beale S.I."/>
        </authorList>
    </citation>
    <scope>NUCLEOTIDE SEQUENCE [GENOMIC DNA] OF 1-85</scope>
</reference>
<evidence type="ECO:0000250" key="1"/>
<evidence type="ECO:0000305" key="2"/>
<accession>P28464</accession>
<accession>B3QMK1</accession>
<keyword id="KW-0149">Chlorophyll biosynthesis</keyword>
<keyword id="KW-0627">Porphyrin biosynthesis</keyword>
<keyword id="KW-0808">Transferase</keyword>
<protein>
    <recommendedName>
        <fullName>Porphobilinogen deaminase</fullName>
        <shortName>PBG</shortName>
        <ecNumber>2.5.1.61</ecNumber>
    </recommendedName>
    <alternativeName>
        <fullName>Hydroxymethylbilane synthase</fullName>
        <shortName>HMBS</shortName>
    </alternativeName>
    <alternativeName>
        <fullName>Pre-uroporphyrinogen synthase</fullName>
    </alternativeName>
</protein>
<comment type="function">
    <text evidence="1">Tetrapolymerization of the monopyrrole PBG into the hydroxymethylbilane pre-uroporphyrinogen in several discrete steps.</text>
</comment>
<comment type="catalytic activity">
    <reaction>
        <text>4 porphobilinogen + H2O = hydroxymethylbilane + 4 NH4(+)</text>
        <dbReference type="Rhea" id="RHEA:13185"/>
        <dbReference type="ChEBI" id="CHEBI:15377"/>
        <dbReference type="ChEBI" id="CHEBI:28938"/>
        <dbReference type="ChEBI" id="CHEBI:57845"/>
        <dbReference type="ChEBI" id="CHEBI:58126"/>
        <dbReference type="EC" id="2.5.1.61"/>
    </reaction>
</comment>
<comment type="cofactor">
    <cofactor>
        <name>dipyrromethane</name>
        <dbReference type="ChEBI" id="CHEBI:60342"/>
    </cofactor>
    <text>Binds 1 dipyrromethane group covalently.</text>
</comment>
<comment type="pathway">
    <text>Porphyrin-containing compound metabolism; protoporphyrin-IX biosynthesis; coproporphyrinogen-III from 5-aminolevulinate: step 2/4.</text>
</comment>
<comment type="pathway">
    <text>Porphyrin-containing compound metabolism; chlorophyll biosynthesis.</text>
</comment>
<comment type="subunit">
    <text>Monomer.</text>
</comment>
<comment type="miscellaneous">
    <text evidence="1">The porphobilinogen subunits are added to the dipyrromethane group.</text>
</comment>
<comment type="similarity">
    <text evidence="2">Belongs to the HMBS family.</text>
</comment>
<comment type="sequence caution" evidence="2">
    <conflict type="frameshift">
        <sequence resource="EMBL-CDS" id="AAA23113"/>
    </conflict>
</comment>
<comment type="sequence caution" evidence="2">
    <conflict type="erroneous initiation">
        <sequence resource="EMBL-CDS" id="AAC61857"/>
    </conflict>
</comment>
<feature type="chain" id="PRO_0000142923" description="Porphobilinogen deaminase">
    <location>
        <begin position="1"/>
        <end position="312"/>
    </location>
</feature>
<feature type="modified residue" description="S-(dipyrrolylmethanemethyl)cysteine" evidence="1">
    <location>
        <position position="241"/>
    </location>
</feature>
<feature type="sequence conflict" description="In Ref. 1; AAA23113 and 3; AAC61857." evidence="2" ref="1 3">
    <original>T</original>
    <variation>S</variation>
    <location>
        <position position="36"/>
    </location>
</feature>
<sequence length="312" mass="34358">MKKEIIIGTRSSPLALWQAEFTKAELSKRFPDMNITLKLVKTTGDVLLDSPLSKIGDMGLFTKDIEKHLLAGEIDLAVHSLKDVPTGTPEGLVITSFTEREDTRDVIISKSGKGLMDLPQNAKMATSSLRRMSQLLSLRPDLEIMDIRGNLNTRFKKFDEGDFDAMMLAYAGVYRLEFSDRITEILPHETMLPAVGQGALGIETRTDDAETREIVRVLNDDNTEMCCRAERALLRHLQGGCQIPIGSFGSYIDGTLKLLAFVGSVDGKTGLRNEVTKAVKTPEEAEAVGIELAEILLSMGAEKILADIRKTC</sequence>
<organism>
    <name type="scientific">Chlorobaculum parvum (strain DSM 263 / NCIMB 8327)</name>
    <name type="common">Chlorobium vibrioforme subsp. thiosulfatophilum</name>
    <dbReference type="NCBI Taxonomy" id="517417"/>
    <lineage>
        <taxon>Bacteria</taxon>
        <taxon>Pseudomonadati</taxon>
        <taxon>Chlorobiota</taxon>
        <taxon>Chlorobiia</taxon>
        <taxon>Chlorobiales</taxon>
        <taxon>Chlorobiaceae</taxon>
        <taxon>Chlorobaculum</taxon>
    </lineage>
</organism>
<proteinExistence type="inferred from homology"/>
<name>HEM3_CHLP8</name>
<dbReference type="EC" id="2.5.1.61"/>
<dbReference type="EMBL" id="M96364">
    <property type="protein sequence ID" value="AAA23113.1"/>
    <property type="status" value="ALT_FRAME"/>
    <property type="molecule type" value="Genomic_DNA"/>
</dbReference>
<dbReference type="EMBL" id="CP001099">
    <property type="protein sequence ID" value="ACF11154.1"/>
    <property type="molecule type" value="Genomic_DNA"/>
</dbReference>
<dbReference type="EMBL" id="AF080069">
    <property type="protein sequence ID" value="AAC61857.1"/>
    <property type="status" value="ALT_INIT"/>
    <property type="molecule type" value="Genomic_DNA"/>
</dbReference>
<dbReference type="PIR" id="B48359">
    <property type="entry name" value="B48359"/>
</dbReference>
<dbReference type="RefSeq" id="WP_012501987.1">
    <property type="nucleotide sequence ID" value="NC_011027.1"/>
</dbReference>
<dbReference type="SMR" id="P28464"/>
<dbReference type="STRING" id="517417.Cpar_0737"/>
<dbReference type="KEGG" id="cpc:Cpar_0737"/>
<dbReference type="eggNOG" id="COG0181">
    <property type="taxonomic scope" value="Bacteria"/>
</dbReference>
<dbReference type="HOGENOM" id="CLU_019704_0_2_10"/>
<dbReference type="OrthoDB" id="9810298at2"/>
<dbReference type="UniPathway" id="UPA00251">
    <property type="reaction ID" value="UER00319"/>
</dbReference>
<dbReference type="UniPathway" id="UPA00668"/>
<dbReference type="Proteomes" id="UP000008811">
    <property type="component" value="Chromosome"/>
</dbReference>
<dbReference type="GO" id="GO:0005737">
    <property type="term" value="C:cytoplasm"/>
    <property type="evidence" value="ECO:0007669"/>
    <property type="project" value="TreeGrafter"/>
</dbReference>
<dbReference type="GO" id="GO:0004418">
    <property type="term" value="F:hydroxymethylbilane synthase activity"/>
    <property type="evidence" value="ECO:0007669"/>
    <property type="project" value="UniProtKB-UniRule"/>
</dbReference>
<dbReference type="GO" id="GO:0015995">
    <property type="term" value="P:chlorophyll biosynthetic process"/>
    <property type="evidence" value="ECO:0007669"/>
    <property type="project" value="UniProtKB-UniRule"/>
</dbReference>
<dbReference type="GO" id="GO:0006782">
    <property type="term" value="P:protoporphyrinogen IX biosynthetic process"/>
    <property type="evidence" value="ECO:0007669"/>
    <property type="project" value="UniProtKB-UniRule"/>
</dbReference>
<dbReference type="CDD" id="cd13646">
    <property type="entry name" value="PBP2_EcHMBS_like"/>
    <property type="match status" value="1"/>
</dbReference>
<dbReference type="FunFam" id="3.30.160.40:FF:000002">
    <property type="entry name" value="Porphobilinogen deaminase"/>
    <property type="match status" value="1"/>
</dbReference>
<dbReference type="FunFam" id="3.40.190.10:FF:000004">
    <property type="entry name" value="Porphobilinogen deaminase"/>
    <property type="match status" value="1"/>
</dbReference>
<dbReference type="FunFam" id="3.40.190.10:FF:000005">
    <property type="entry name" value="Porphobilinogen deaminase"/>
    <property type="match status" value="1"/>
</dbReference>
<dbReference type="Gene3D" id="3.40.190.10">
    <property type="entry name" value="Periplasmic binding protein-like II"/>
    <property type="match status" value="2"/>
</dbReference>
<dbReference type="Gene3D" id="3.30.160.40">
    <property type="entry name" value="Porphobilinogen deaminase, C-terminal domain"/>
    <property type="match status" value="1"/>
</dbReference>
<dbReference type="HAMAP" id="MF_00260">
    <property type="entry name" value="Porphobil_deam"/>
    <property type="match status" value="1"/>
</dbReference>
<dbReference type="InterPro" id="IPR000860">
    <property type="entry name" value="HemC"/>
</dbReference>
<dbReference type="InterPro" id="IPR022419">
    <property type="entry name" value="Porphobilin_deaminase_cofac_BS"/>
</dbReference>
<dbReference type="InterPro" id="IPR022417">
    <property type="entry name" value="Porphobilin_deaminase_N"/>
</dbReference>
<dbReference type="InterPro" id="IPR022418">
    <property type="entry name" value="Porphobilinogen_deaminase_C"/>
</dbReference>
<dbReference type="InterPro" id="IPR036803">
    <property type="entry name" value="Porphobilinogen_deaminase_C_sf"/>
</dbReference>
<dbReference type="NCBIfam" id="TIGR00212">
    <property type="entry name" value="hemC"/>
    <property type="match status" value="1"/>
</dbReference>
<dbReference type="PANTHER" id="PTHR11557">
    <property type="entry name" value="PORPHOBILINOGEN DEAMINASE"/>
    <property type="match status" value="1"/>
</dbReference>
<dbReference type="PANTHER" id="PTHR11557:SF0">
    <property type="entry name" value="PORPHOBILINOGEN DEAMINASE"/>
    <property type="match status" value="1"/>
</dbReference>
<dbReference type="Pfam" id="PF01379">
    <property type="entry name" value="Porphobil_deam"/>
    <property type="match status" value="1"/>
</dbReference>
<dbReference type="Pfam" id="PF03900">
    <property type="entry name" value="Porphobil_deamC"/>
    <property type="match status" value="1"/>
</dbReference>
<dbReference type="PIRSF" id="PIRSF001438">
    <property type="entry name" value="4pyrrol_synth_OHMeBilane_synth"/>
    <property type="match status" value="1"/>
</dbReference>
<dbReference type="PRINTS" id="PR00151">
    <property type="entry name" value="PORPHBDMNASE"/>
</dbReference>
<dbReference type="SUPFAM" id="SSF53850">
    <property type="entry name" value="Periplasmic binding protein-like II"/>
    <property type="match status" value="1"/>
</dbReference>
<dbReference type="SUPFAM" id="SSF54782">
    <property type="entry name" value="Porphobilinogen deaminase (hydroxymethylbilane synthase), C-terminal domain"/>
    <property type="match status" value="1"/>
</dbReference>
<dbReference type="PROSITE" id="PS00533">
    <property type="entry name" value="PORPHOBILINOGEN_DEAM"/>
    <property type="match status" value="1"/>
</dbReference>
<gene>
    <name type="primary">hemC</name>
    <name type="ordered locus">Cpar_0737</name>
</gene>